<name>COPA_STAES</name>
<sequence>MANTTLTLDIIGMTCAACSNRIEKKLNRMNHVQAKVNLTTEKATIDYESDDYHLEDFVEQIQSLGYDVAVEQVELNINGMTCAACSNRIEKVLNQTQGVQQATVNLTTEQALIKYYPSATNTEALIKRIQNIGYDAETKTSSKAQSNRKKQELKHKRNKLIISAILSLPLLLVMVVHISPISIPSILVNPWVQLILSTPVQFIIGWQFYVGAYKNLRNGSANMDVLVAVGTSAAYFYSIYEMMMWLTHQTHHPHLYFETSAILITLILLGKYLEARAKSQTTNALSELLNLQAKEARVIKENKEIMLPLDKVKVGDTLLIKPGEKIPVDGKVTKGDTSIDESMLTGESIPVEKSSGDSVIGSTMNKNGSIMIEATQVGGDTALSHIIKVVEDAQSSKAPIQRLADIISGYFVPIVVSIAVITFIIWIIFVHPGQFEPALVSAISVLVIACPCALGLATPTSIMVGTGRAAENGILFKGGQFVERAHYVDTIVLDKTGTITNGQPVVTDYVGDNDTLQLLASAENASEHPLADAIVTYAKDKGLNLLDNDTFKSIPGHGIKATIHQQQILVGNRKLMNDYNISISNKLNDQLNHYEHLGQTAMMIAVDNQINGIIAVADTVKNDAKQAIKELRNMNIDVVMLTGDNNRTAQTIAKQVGIEHVIAEVLPEEKAHQISLLQDKGKQVAMVGDGINDAPALVKADIGMAIGTGAEVAIEAADITILGGDLLLVPKAIKASKATIKNIRQNLFWAFGYNVAGIPIAACGLLAPWIAGAAMALSSVSVVMNALRLKKMKL</sequence>
<accession>Q8CN02</accession>
<dbReference type="EC" id="7.2.2.8"/>
<dbReference type="EMBL" id="AE015929">
    <property type="protein sequence ID" value="AAO05761.1"/>
    <property type="molecule type" value="Genomic_DNA"/>
</dbReference>
<dbReference type="RefSeq" id="NP_765674.1">
    <property type="nucleotide sequence ID" value="NC_004461.1"/>
</dbReference>
<dbReference type="RefSeq" id="WP_001832365.1">
    <property type="nucleotide sequence ID" value="NZ_WBME01000013.1"/>
</dbReference>
<dbReference type="SMR" id="Q8CN02"/>
<dbReference type="KEGG" id="sep:SE_2119"/>
<dbReference type="PATRIC" id="fig|176280.10.peg.2070"/>
<dbReference type="eggNOG" id="COG2217">
    <property type="taxonomic scope" value="Bacteria"/>
</dbReference>
<dbReference type="HOGENOM" id="CLU_001771_0_3_9"/>
<dbReference type="OrthoDB" id="9813266at2"/>
<dbReference type="Proteomes" id="UP000001411">
    <property type="component" value="Chromosome"/>
</dbReference>
<dbReference type="GO" id="GO:0005886">
    <property type="term" value="C:plasma membrane"/>
    <property type="evidence" value="ECO:0007669"/>
    <property type="project" value="UniProtKB-SubCell"/>
</dbReference>
<dbReference type="GO" id="GO:0005524">
    <property type="term" value="F:ATP binding"/>
    <property type="evidence" value="ECO:0007669"/>
    <property type="project" value="UniProtKB-KW"/>
</dbReference>
<dbReference type="GO" id="GO:0016887">
    <property type="term" value="F:ATP hydrolysis activity"/>
    <property type="evidence" value="ECO:0007669"/>
    <property type="project" value="InterPro"/>
</dbReference>
<dbReference type="GO" id="GO:0005507">
    <property type="term" value="F:copper ion binding"/>
    <property type="evidence" value="ECO:0007669"/>
    <property type="project" value="InterPro"/>
</dbReference>
<dbReference type="GO" id="GO:0043682">
    <property type="term" value="F:P-type divalent copper transporter activity"/>
    <property type="evidence" value="ECO:0007669"/>
    <property type="project" value="TreeGrafter"/>
</dbReference>
<dbReference type="GO" id="GO:0140581">
    <property type="term" value="F:P-type monovalent copper transporter activity"/>
    <property type="evidence" value="ECO:0007669"/>
    <property type="project" value="UniProtKB-EC"/>
</dbReference>
<dbReference type="GO" id="GO:0055070">
    <property type="term" value="P:copper ion homeostasis"/>
    <property type="evidence" value="ECO:0007669"/>
    <property type="project" value="TreeGrafter"/>
</dbReference>
<dbReference type="CDD" id="cd00371">
    <property type="entry name" value="HMA"/>
    <property type="match status" value="2"/>
</dbReference>
<dbReference type="CDD" id="cd02094">
    <property type="entry name" value="P-type_ATPase_Cu-like"/>
    <property type="match status" value="1"/>
</dbReference>
<dbReference type="FunFam" id="2.70.150.10:FF:000020">
    <property type="entry name" value="Copper-exporting P-type ATPase A"/>
    <property type="match status" value="1"/>
</dbReference>
<dbReference type="FunFam" id="3.30.70.100:FF:000005">
    <property type="entry name" value="Copper-exporting P-type ATPase A"/>
    <property type="match status" value="2"/>
</dbReference>
<dbReference type="FunFam" id="3.40.50.1000:FF:000144">
    <property type="entry name" value="copper-transporting ATPase 1 isoform X2"/>
    <property type="match status" value="1"/>
</dbReference>
<dbReference type="Gene3D" id="3.30.70.100">
    <property type="match status" value="2"/>
</dbReference>
<dbReference type="Gene3D" id="3.40.1110.10">
    <property type="entry name" value="Calcium-transporting ATPase, cytoplasmic domain N"/>
    <property type="match status" value="1"/>
</dbReference>
<dbReference type="Gene3D" id="2.70.150.10">
    <property type="entry name" value="Calcium-transporting ATPase, cytoplasmic transduction domain A"/>
    <property type="match status" value="1"/>
</dbReference>
<dbReference type="Gene3D" id="3.40.50.1000">
    <property type="entry name" value="HAD superfamily/HAD-like"/>
    <property type="match status" value="1"/>
</dbReference>
<dbReference type="InterPro" id="IPR023299">
    <property type="entry name" value="ATPase_P-typ_cyto_dom_N"/>
</dbReference>
<dbReference type="InterPro" id="IPR018303">
    <property type="entry name" value="ATPase_P-typ_P_site"/>
</dbReference>
<dbReference type="InterPro" id="IPR023298">
    <property type="entry name" value="ATPase_P-typ_TM_dom_sf"/>
</dbReference>
<dbReference type="InterPro" id="IPR008250">
    <property type="entry name" value="ATPase_P-typ_transduc_dom_A_sf"/>
</dbReference>
<dbReference type="InterPro" id="IPR036412">
    <property type="entry name" value="HAD-like_sf"/>
</dbReference>
<dbReference type="InterPro" id="IPR023214">
    <property type="entry name" value="HAD_sf"/>
</dbReference>
<dbReference type="InterPro" id="IPR017969">
    <property type="entry name" value="Heavy-metal-associated_CS"/>
</dbReference>
<dbReference type="InterPro" id="IPR006122">
    <property type="entry name" value="HMA_Cu_ion-bd"/>
</dbReference>
<dbReference type="InterPro" id="IPR006121">
    <property type="entry name" value="HMA_dom"/>
</dbReference>
<dbReference type="InterPro" id="IPR036163">
    <property type="entry name" value="HMA_dom_sf"/>
</dbReference>
<dbReference type="InterPro" id="IPR027256">
    <property type="entry name" value="P-typ_ATPase_IB"/>
</dbReference>
<dbReference type="InterPro" id="IPR001757">
    <property type="entry name" value="P_typ_ATPase"/>
</dbReference>
<dbReference type="InterPro" id="IPR044492">
    <property type="entry name" value="P_typ_ATPase_HD_dom"/>
</dbReference>
<dbReference type="NCBIfam" id="TIGR01511">
    <property type="entry name" value="ATPase-IB1_Cu"/>
    <property type="match status" value="1"/>
</dbReference>
<dbReference type="NCBIfam" id="TIGR01525">
    <property type="entry name" value="ATPase-IB_hvy"/>
    <property type="match status" value="1"/>
</dbReference>
<dbReference type="NCBIfam" id="TIGR01494">
    <property type="entry name" value="ATPase_P-type"/>
    <property type="match status" value="1"/>
</dbReference>
<dbReference type="NCBIfam" id="TIGR00003">
    <property type="entry name" value="copper ion binding protein"/>
    <property type="match status" value="1"/>
</dbReference>
<dbReference type="PANTHER" id="PTHR43520">
    <property type="entry name" value="ATP7, ISOFORM B"/>
    <property type="match status" value="1"/>
</dbReference>
<dbReference type="PANTHER" id="PTHR43520:SF8">
    <property type="entry name" value="P-TYPE CU(+) TRANSPORTER"/>
    <property type="match status" value="1"/>
</dbReference>
<dbReference type="Pfam" id="PF00122">
    <property type="entry name" value="E1-E2_ATPase"/>
    <property type="match status" value="1"/>
</dbReference>
<dbReference type="Pfam" id="PF00403">
    <property type="entry name" value="HMA"/>
    <property type="match status" value="2"/>
</dbReference>
<dbReference type="Pfam" id="PF00702">
    <property type="entry name" value="Hydrolase"/>
    <property type="match status" value="1"/>
</dbReference>
<dbReference type="PRINTS" id="PR00119">
    <property type="entry name" value="CATATPASE"/>
</dbReference>
<dbReference type="PRINTS" id="PR00120">
    <property type="entry name" value="HATPASE"/>
</dbReference>
<dbReference type="SFLD" id="SFLDS00003">
    <property type="entry name" value="Haloacid_Dehalogenase"/>
    <property type="match status" value="1"/>
</dbReference>
<dbReference type="SFLD" id="SFLDF00027">
    <property type="entry name" value="p-type_atpase"/>
    <property type="match status" value="1"/>
</dbReference>
<dbReference type="SUPFAM" id="SSF81653">
    <property type="entry name" value="Calcium ATPase, transduction domain A"/>
    <property type="match status" value="1"/>
</dbReference>
<dbReference type="SUPFAM" id="SSF81665">
    <property type="entry name" value="Calcium ATPase, transmembrane domain M"/>
    <property type="match status" value="1"/>
</dbReference>
<dbReference type="SUPFAM" id="SSF56784">
    <property type="entry name" value="HAD-like"/>
    <property type="match status" value="1"/>
</dbReference>
<dbReference type="SUPFAM" id="SSF55008">
    <property type="entry name" value="HMA, heavy metal-associated domain"/>
    <property type="match status" value="2"/>
</dbReference>
<dbReference type="PROSITE" id="PS00154">
    <property type="entry name" value="ATPASE_E1_E2"/>
    <property type="match status" value="1"/>
</dbReference>
<dbReference type="PROSITE" id="PS01047">
    <property type="entry name" value="HMA_1"/>
    <property type="match status" value="2"/>
</dbReference>
<dbReference type="PROSITE" id="PS50846">
    <property type="entry name" value="HMA_2"/>
    <property type="match status" value="2"/>
</dbReference>
<gene>
    <name type="primary">copA</name>
    <name type="ordered locus">SE_2119</name>
</gene>
<comment type="function">
    <text evidence="1">Involved in copper export.</text>
</comment>
<comment type="catalytic activity">
    <reaction>
        <text>Cu(+)(in) + ATP + H2O = Cu(+)(out) + ADP + phosphate + H(+)</text>
        <dbReference type="Rhea" id="RHEA:25792"/>
        <dbReference type="ChEBI" id="CHEBI:15377"/>
        <dbReference type="ChEBI" id="CHEBI:15378"/>
        <dbReference type="ChEBI" id="CHEBI:30616"/>
        <dbReference type="ChEBI" id="CHEBI:43474"/>
        <dbReference type="ChEBI" id="CHEBI:49552"/>
        <dbReference type="ChEBI" id="CHEBI:456216"/>
        <dbReference type="EC" id="7.2.2.8"/>
    </reaction>
</comment>
<comment type="subcellular location">
    <subcellularLocation>
        <location evidence="1">Cell membrane</location>
        <topology evidence="1">Multi-pass membrane protein</topology>
    </subcellularLocation>
</comment>
<comment type="similarity">
    <text evidence="4">Belongs to the cation transport ATPase (P-type) (TC 3.A.3) family. Type IB subfamily.</text>
</comment>
<evidence type="ECO:0000250" key="1"/>
<evidence type="ECO:0000255" key="2"/>
<evidence type="ECO:0000255" key="3">
    <source>
        <dbReference type="PROSITE-ProRule" id="PRU00280"/>
    </source>
</evidence>
<evidence type="ECO:0000305" key="4"/>
<proteinExistence type="inferred from homology"/>
<feature type="chain" id="PRO_0000350597" description="Copper-exporting P-type ATPase">
    <location>
        <begin position="1"/>
        <end position="794"/>
    </location>
</feature>
<feature type="transmembrane region" description="Helical" evidence="2">
    <location>
        <begin position="161"/>
        <end position="181"/>
    </location>
</feature>
<feature type="transmembrane region" description="Helical" evidence="2">
    <location>
        <begin position="186"/>
        <end position="206"/>
    </location>
</feature>
<feature type="transmembrane region" description="Helical" evidence="2">
    <location>
        <begin position="225"/>
        <end position="245"/>
    </location>
</feature>
<feature type="transmembrane region" description="Helical" evidence="2">
    <location>
        <begin position="255"/>
        <end position="275"/>
    </location>
</feature>
<feature type="transmembrane region" description="Helical" evidence="2">
    <location>
        <begin position="410"/>
        <end position="430"/>
    </location>
</feature>
<feature type="transmembrane region" description="Helical" evidence="2">
    <location>
        <begin position="437"/>
        <end position="457"/>
    </location>
</feature>
<feature type="transmembrane region" description="Helical" evidence="2">
    <location>
        <begin position="747"/>
        <end position="767"/>
    </location>
</feature>
<feature type="transmembrane region" description="Helical" evidence="2">
    <location>
        <begin position="773"/>
        <end position="789"/>
    </location>
</feature>
<feature type="domain" description="HMA 1" evidence="3">
    <location>
        <begin position="4"/>
        <end position="69"/>
    </location>
</feature>
<feature type="domain" description="HMA 2" evidence="3">
    <location>
        <begin position="71"/>
        <end position="137"/>
    </location>
</feature>
<feature type="active site" description="4-aspartylphosphate intermediate" evidence="1">
    <location>
        <position position="494"/>
    </location>
</feature>
<feature type="binding site" evidence="3">
    <location>
        <position position="15"/>
    </location>
    <ligand>
        <name>Cu(+)</name>
        <dbReference type="ChEBI" id="CHEBI:49552"/>
        <label>1</label>
    </ligand>
</feature>
<feature type="binding site" evidence="3">
    <location>
        <position position="18"/>
    </location>
    <ligand>
        <name>Cu(+)</name>
        <dbReference type="ChEBI" id="CHEBI:49552"/>
        <label>1</label>
    </ligand>
</feature>
<feature type="binding site" evidence="3">
    <location>
        <position position="82"/>
    </location>
    <ligand>
        <name>Cu(+)</name>
        <dbReference type="ChEBI" id="CHEBI:49552"/>
        <label>2</label>
    </ligand>
</feature>
<feature type="binding site" evidence="3">
    <location>
        <position position="85"/>
    </location>
    <ligand>
        <name>Cu(+)</name>
        <dbReference type="ChEBI" id="CHEBI:49552"/>
        <label>2</label>
    </ligand>
</feature>
<feature type="binding site">
    <location>
        <position position="689"/>
    </location>
    <ligand>
        <name>Mg(2+)</name>
        <dbReference type="ChEBI" id="CHEBI:18420"/>
    </ligand>
</feature>
<feature type="binding site">
    <location>
        <position position="693"/>
    </location>
    <ligand>
        <name>Mg(2+)</name>
        <dbReference type="ChEBI" id="CHEBI:18420"/>
    </ligand>
</feature>
<organism>
    <name type="scientific">Staphylococcus epidermidis (strain ATCC 12228 / FDA PCI 1200)</name>
    <dbReference type="NCBI Taxonomy" id="176280"/>
    <lineage>
        <taxon>Bacteria</taxon>
        <taxon>Bacillati</taxon>
        <taxon>Bacillota</taxon>
        <taxon>Bacilli</taxon>
        <taxon>Bacillales</taxon>
        <taxon>Staphylococcaceae</taxon>
        <taxon>Staphylococcus</taxon>
    </lineage>
</organism>
<reference key="1">
    <citation type="journal article" date="2003" name="Mol. Microbiol.">
        <title>Genome-based analysis of virulence genes in a non-biofilm-forming Staphylococcus epidermidis strain (ATCC 12228).</title>
        <authorList>
            <person name="Zhang Y.-Q."/>
            <person name="Ren S.-X."/>
            <person name="Li H.-L."/>
            <person name="Wang Y.-X."/>
            <person name="Fu G."/>
            <person name="Yang J."/>
            <person name="Qin Z.-Q."/>
            <person name="Miao Y.-G."/>
            <person name="Wang W.-Y."/>
            <person name="Chen R.-S."/>
            <person name="Shen Y."/>
            <person name="Chen Z."/>
            <person name="Yuan Z.-H."/>
            <person name="Zhao G.-P."/>
            <person name="Qu D."/>
            <person name="Danchin A."/>
            <person name="Wen Y.-M."/>
        </authorList>
    </citation>
    <scope>NUCLEOTIDE SEQUENCE [LARGE SCALE GENOMIC DNA]</scope>
    <source>
        <strain>ATCC 12228 / FDA PCI 1200</strain>
    </source>
</reference>
<protein>
    <recommendedName>
        <fullName>Copper-exporting P-type ATPase</fullName>
        <ecNumber>7.2.2.8</ecNumber>
    </recommendedName>
    <alternativeName>
        <fullName>Copper-exporting P-type ATPase A</fullName>
    </alternativeName>
    <alternativeName>
        <fullName>Cu(+)-exporting ATPase</fullName>
    </alternativeName>
</protein>
<keyword id="KW-0067">ATP-binding</keyword>
<keyword id="KW-1003">Cell membrane</keyword>
<keyword id="KW-0186">Copper</keyword>
<keyword id="KW-0187">Copper transport</keyword>
<keyword id="KW-0406">Ion transport</keyword>
<keyword id="KW-0460">Magnesium</keyword>
<keyword id="KW-0472">Membrane</keyword>
<keyword id="KW-0479">Metal-binding</keyword>
<keyword id="KW-0547">Nucleotide-binding</keyword>
<keyword id="KW-0597">Phosphoprotein</keyword>
<keyword id="KW-0677">Repeat</keyword>
<keyword id="KW-1278">Translocase</keyword>
<keyword id="KW-0812">Transmembrane</keyword>
<keyword id="KW-1133">Transmembrane helix</keyword>
<keyword id="KW-0813">Transport</keyword>